<evidence type="ECO:0000250" key="1"/>
<evidence type="ECO:0000250" key="2">
    <source>
        <dbReference type="UniProtKB" id="P07900"/>
    </source>
</evidence>
<evidence type="ECO:0000250" key="3">
    <source>
        <dbReference type="UniProtKB" id="P08238"/>
    </source>
</evidence>
<evidence type="ECO:0000250" key="4">
    <source>
        <dbReference type="UniProtKB" id="P11499"/>
    </source>
</evidence>
<evidence type="ECO:0000250" key="5">
    <source>
        <dbReference type="UniProtKB" id="P34058"/>
    </source>
</evidence>
<evidence type="ECO:0000250" key="6">
    <source>
        <dbReference type="UniProtKB" id="Q6AZV1"/>
    </source>
</evidence>
<evidence type="ECO:0000256" key="7">
    <source>
        <dbReference type="SAM" id="MobiDB-lite"/>
    </source>
</evidence>
<evidence type="ECO:0000269" key="8">
    <source>
    </source>
</evidence>
<evidence type="ECO:0000305" key="9"/>
<feature type="initiator methionine" description="Removed" evidence="8">
    <location>
        <position position="1"/>
    </location>
</feature>
<feature type="chain" id="PRO_0000062919" description="Heat shock protein HSP 90-beta">
    <location>
        <begin position="2"/>
        <end position="726"/>
    </location>
</feature>
<feature type="region of interest" description="Interaction with TP53" evidence="3">
    <location>
        <begin position="2"/>
        <end position="529"/>
    </location>
</feature>
<feature type="region of interest" description="Interaction with BIRC2" evidence="3">
    <location>
        <begin position="2"/>
        <end position="214"/>
    </location>
</feature>
<feature type="region of interest" description="Interaction with NR3C1" evidence="4">
    <location>
        <begin position="9"/>
        <end position="231"/>
    </location>
</feature>
<feature type="region of interest" description="Interaction with AHSA1" evidence="3">
    <location>
        <begin position="215"/>
        <end position="554"/>
    </location>
</feature>
<feature type="region of interest" description="Disordered" evidence="7">
    <location>
        <begin position="221"/>
        <end position="272"/>
    </location>
</feature>
<feature type="region of interest" description="Interaction with NR3C1" evidence="4">
    <location>
        <begin position="266"/>
        <end position="610"/>
    </location>
</feature>
<feature type="region of interest" description="Interaction with NR1D1" evidence="4">
    <location>
        <begin position="622"/>
        <end position="725"/>
    </location>
</feature>
<feature type="region of interest" description="Disordered" evidence="7">
    <location>
        <begin position="697"/>
        <end position="726"/>
    </location>
</feature>
<feature type="short sequence motif" description="TPR repeat-binding" evidence="3">
    <location>
        <begin position="722"/>
        <end position="726"/>
    </location>
</feature>
<feature type="compositionally biased region" description="Acidic residues" evidence="7">
    <location>
        <begin position="225"/>
        <end position="246"/>
    </location>
</feature>
<feature type="binding site" evidence="1">
    <location>
        <position position="46"/>
    </location>
    <ligand>
        <name>ATP</name>
        <dbReference type="ChEBI" id="CHEBI:30616"/>
    </ligand>
</feature>
<feature type="binding site" evidence="3">
    <location>
        <position position="88"/>
    </location>
    <ligand>
        <name>ATP</name>
        <dbReference type="ChEBI" id="CHEBI:30616"/>
    </ligand>
</feature>
<feature type="binding site" evidence="1">
    <location>
        <position position="107"/>
    </location>
    <ligand>
        <name>ATP</name>
        <dbReference type="ChEBI" id="CHEBI:30616"/>
    </ligand>
</feature>
<feature type="binding site" evidence="1">
    <location>
        <position position="133"/>
    </location>
    <ligand>
        <name>ATP</name>
        <dbReference type="ChEBI" id="CHEBI:30616"/>
    </ligand>
</feature>
<feature type="binding site" evidence="1">
    <location>
        <position position="394"/>
    </location>
    <ligand>
        <name>ATP</name>
        <dbReference type="ChEBI" id="CHEBI:30616"/>
    </ligand>
</feature>
<feature type="site" description="Cleaved under oxidative stress" evidence="3">
    <location>
        <begin position="126"/>
        <end position="127"/>
    </location>
</feature>
<feature type="modified residue" description="N6-succinyllysine" evidence="4">
    <location>
        <position position="219"/>
    </location>
</feature>
<feature type="modified residue" description="Phosphoserine" evidence="3">
    <location>
        <position position="226"/>
    </location>
</feature>
<feature type="modified residue" description="Phosphoserine" evidence="3">
    <location>
        <position position="257"/>
    </location>
</feature>
<feature type="modified residue" description="Phosphoserine" evidence="4">
    <location>
        <position position="263"/>
    </location>
</feature>
<feature type="modified residue" description="Phosphothreonine" evidence="3">
    <location>
        <position position="299"/>
    </location>
</feature>
<feature type="modified residue" description="Phosphotyrosine" evidence="3">
    <location>
        <position position="303"/>
    </location>
</feature>
<feature type="modified residue" description="Phosphotyrosine" evidence="4">
    <location>
        <position position="307"/>
    </location>
</feature>
<feature type="modified residue" description="Phosphoserine" evidence="3">
    <location>
        <position position="309"/>
    </location>
</feature>
<feature type="modified residue" description="N6-malonyllysine" evidence="3">
    <location>
        <position position="401"/>
    </location>
</feature>
<feature type="modified residue" description="N6-acetyllysine" evidence="3">
    <location>
        <position position="437"/>
    </location>
</feature>
<feature type="modified residue" description="Phosphoserine" evidence="3">
    <location>
        <position position="447"/>
    </location>
</feature>
<feature type="modified residue" description="Phosphothreonine" evidence="3">
    <location>
        <position position="481"/>
    </location>
</feature>
<feature type="modified residue" description="N6-acetyllysine" evidence="3">
    <location>
        <position position="483"/>
    </location>
</feature>
<feature type="modified residue" description="Phosphotyrosine" evidence="4">
    <location>
        <position position="486"/>
    </location>
</feature>
<feature type="modified residue" description="N6-methylated lysine; alternate" evidence="3">
    <location>
        <position position="533"/>
    </location>
</feature>
<feature type="modified residue" description="N6-succinyllysine; alternate" evidence="4">
    <location>
        <position position="533"/>
    </location>
</feature>
<feature type="modified residue" description="N6-methylated lysine" evidence="3">
    <location>
        <position position="576"/>
    </location>
</feature>
<feature type="modified residue" description="N6-succinyllysine" evidence="4">
    <location>
        <position position="579"/>
    </location>
</feature>
<feature type="modified residue" description="S-nitrosocysteine" evidence="3">
    <location>
        <position position="592"/>
    </location>
</feature>
<feature type="modified residue" description="N6-acetyllysine" evidence="4">
    <location>
        <position position="626"/>
    </location>
</feature>
<feature type="modified residue" description="Phosphoserine" evidence="3">
    <location>
        <position position="671"/>
    </location>
</feature>
<feature type="modified residue" description="Phosphoserine" evidence="3">
    <location>
        <position position="720"/>
    </location>
</feature>
<feature type="glycosylation site" description="O-linked (GlcNAc) serine" evidence="1">
    <location>
        <position position="436"/>
    </location>
</feature>
<feature type="glycosylation site" description="O-linked (GlcNAc) serine" evidence="1">
    <location>
        <position position="454"/>
    </location>
</feature>
<keyword id="KW-0007">Acetylation</keyword>
<keyword id="KW-0067">ATP-binding</keyword>
<keyword id="KW-1003">Cell membrane</keyword>
<keyword id="KW-0143">Chaperone</keyword>
<keyword id="KW-0963">Cytoplasm</keyword>
<keyword id="KW-0903">Direct protein sequencing</keyword>
<keyword id="KW-0325">Glycoprotein</keyword>
<keyword id="KW-0472">Membrane</keyword>
<keyword id="KW-0488">Methylation</keyword>
<keyword id="KW-0547">Nucleotide-binding</keyword>
<keyword id="KW-0539">Nucleus</keyword>
<keyword id="KW-0597">Phosphoprotein</keyword>
<keyword id="KW-1185">Reference proteome</keyword>
<keyword id="KW-0702">S-nitrosylation</keyword>
<keyword id="KW-0964">Secreted</keyword>
<keyword id="KW-0346">Stress response</keyword>
<keyword id="KW-0832">Ubl conjugation</keyword>
<accession>P30947</accession>
<accession>G1T8Q6</accession>
<sequence>MPEEVHHGEEEVETFAFQAEIAQLMSLIINTFYSNKEIFLRELISNASDALDKIRYESLTDPSKLDSGKELKIDIIPSPQDRTLTLVDTGIGMTKADLINNLGTIAKSGTKAFMEALQAGADISMIGQFGVGFYSAYLVAEKVVVITKHNDDEQYAWESSAGGSFTVRADHGEPIGRGTKVILHLKEDQTEYLEERRVKEVVKKHSQFIGYPITLYLEKEREKEISDDEAEEEKGEEKKEEEDKEDDEKPKIEDVGSDEEDDSGKDKKKKTKKIKEKYIDQEELNKTKPIWTRNPDDITQEEYGEFYKSLTNDWEDHLAVKHFSVEGQLEFRALLFIPRRAPFDLFENKKKKNNIKLYVRRVFIMDSCDELIPEYLNFIRGVVDSEDLPLNISREMLQQSKILKVIRKNIVKKCLELFSELAEDKENYKKFYEAFSKNLKLGIHEDSTNRRRLSELLRYHTSQSGDEMTSLSEYVSRMKETQKSIYYITGESKEQVANSAFVERVRKRGFEVVYMTEPIDEYCVQQLKEFDGKSLVSVTKEGLELPEDEEEKKKMEESKAKFENLCKLMKEILDKKVEKVTISNRLVSSPCCIVTSTYGWTANMERIMKAQALRDNSTMGYMMAKKHLEINPDHPIVETLRQKAEADKNDKAVKDLVVLLFETALLSSGFSLEDPQTHSNRIYRMIKLGLGIDEDEVAAEEPSAAVPEEIPPLEGDEDASRMEEVD</sequence>
<protein>
    <recommendedName>
        <fullName>Heat shock protein HSP 90-beta</fullName>
    </recommendedName>
</protein>
<gene>
    <name type="primary">HSP90AB1</name>
    <name evidence="3" type="synonym">HSPC3</name>
    <name type="synonym">HSPCB</name>
</gene>
<name>HS90B_RABIT</name>
<comment type="function">
    <text evidence="3">Molecular chaperone that promotes the maturation, structural maintenance and proper regulation of specific target proteins involved for instance in cell cycle control and signal transduction. Undergoes a functional cycle linked to its ATPase activity. This cycle probably induces conformational changes in the client proteins, thereby causing their activation. Interacts dynamically with various co-chaperones that modulate its substrate recognition, ATPase cycle and chaperone function. Engages with a range of client protein classes via its interaction with various co-chaperone proteins or complexes, that act as adapters, simultaneously able to interact with the specific client and the central chaperone itself. Recruitment of ATP and co-chaperone followed by client protein forms a functional chaperone. After the completion of the chaperoning process, properly folded client protein and co-chaperone leave HSP90 in an ADP-bound partially open conformation and finally, ADP is released from HSP90 which acquires an open conformation for the next cycle. Apart from its chaperone activity, it also plays a role in the regulation of the transcription machinery. HSP90 and its co-chaperones modulate transcription at least at three different levels. They first alter the steady-state levels of certain transcription factors in response to various physiological cues. Second, they modulate the activity of certain epigenetic modifiers, such as histone deacetylases or DNA methyl transferases, and thereby respond to the change in the environment. Third, they participate in the eviction of histones from the promoter region of certain genes and thereby turn on gene expression. Antagonizes STUB1-mediated inhibition of TGF-beta signaling via inhibition of STUB1-mediated SMAD3 ubiquitination and degradation. Promotes cell differentiation by chaperoning BIRC2 and thereby protecting from auto-ubiquitination and degradation by the proteasomal machinery. Main chaperone involved in the phosphorylation/activation of the STAT1 by chaperoning both JAK2 and PRKCE under heat shock and in turn, activates its own transcription. Involved in the translocation into ERGIC (endoplasmic reticulum-Golgi intermediate compartment) of leaderless cargos (lacking the secretion signal sequence) such as the interleukin 1/IL-1; the translocation process is mediated by the cargo receptor TMED10.</text>
</comment>
<comment type="activity regulation">
    <text evidence="3">In the resting state, through the dimerization of its C-terminal domain, HSP90 forms a homodimer which is defined as the open conformation. Upon ATP-binding, the N-terminal domain undergoes significant conformational changes and comes in contact to form an active closed conformation. After HSP90 finishes its chaperoning tasks of assisting the proper folding, stabilization and activation of client proteins under the active state, ATP molecule is hydrolyzed to ADP which then dissociates from HSP90 and directs the protein back to the resting state.</text>
</comment>
<comment type="subunit">
    <text evidence="3 4 5">Monomer. Homodimer (By similarity). Forms a complex with CDK6 and CDC37. Interacts with UNC45A; binding to UNC45A involves 2 UNC45A monomers per HSP90AB1 dimer (By similarity). Interacts with CHORDC1 (By similarity). Interacts with DNAJC7. Interacts with FKBP4. May interact with NWD1. Interacts with SGTA. Interacts with HSF1 in an ATP-dependent manner. Interacts with MET; the interaction suppresses MET kinase activity. Interacts with ERBB2 in an ATP-dependent manner; the interaction suppresses ERBB2 kinase activity. Interacts with HIF1A, KEAP1 and RHOBTB2. Interacts with STUB1 and SMAD3. Interacts with XPO1 and AHSA1. Interacts with BIRC2. Interacts with KCNQ4; promotes cell surface expression of KCNQ4. Interacts with BIRC2; prevents auto-ubiquitination and degradation of its client protein BIRC2. Interacts with NOS3. Interacts with AHR; interaction is inhibited by HSP90AB1 phosphorylation on Ser-226 and Ser-257. Interacts with STIP1 and CDC37; upon SMYD2-dependent methylation. Interacts with JAK2 and PRKCE; promotes functional activation in a heat shock-dependent manner. Interacts with HSP90AA1; interaction is constitutive. HSP90AB1-CDC37 chaperone complex interacts with inactive MAPK7 (via N-terminal half) in resting cells; the interaction is MAP2K5-independent and prevents from ubiquitination and proteasomal degradation. Interacts with CDC25A; prevents heat shock-mediated CDC25A degradation and contributes to cell cycle progression. Interacts with TP53 (via DNA binding domain); suppresses TP53 aggregation and prevents from irreversible thermal inactivation. Interacts with TGFB1 processed form (LAP); inhibits latent TGFB1 activation (By similarity). Interacts with TRIM8; prevents nucleus translocation of phosphorylated STAT3 and HSP90AB1 (By similarity). Interacts with NR3C1 (via domain NR LBD) and NR1D1 (via domain NR LBD) (By similarity). Interacts with PDCL3 (By similarity). Interacts with TTC4 (via TPR repeats) (By similarity). Interacts with IL1B; the interaction facilitates cargo translocation into the ERGIC (By similarity).</text>
</comment>
<comment type="subcellular location">
    <subcellularLocation>
        <location evidence="3">Cytoplasm</location>
    </subcellularLocation>
    <subcellularLocation>
        <location evidence="3">Melanosome</location>
    </subcellularLocation>
    <subcellularLocation>
        <location evidence="3">Nucleus</location>
    </subcellularLocation>
    <subcellularLocation>
        <location evidence="3">Secreted</location>
    </subcellularLocation>
    <subcellularLocation>
        <location evidence="3">Cell membrane</location>
    </subcellularLocation>
    <subcellularLocation>
        <location evidence="6">Dynein axonemal particle</location>
    </subcellularLocation>
    <text evidence="3">Translocates with BIRC2 from the nucleus to the cytoplasm during differentiation. Secreted when associated with TGFB1 processed form (LAP).</text>
</comment>
<comment type="domain">
    <text evidence="2">The TPR repeat-binding motif mediates interaction with TPR repeat-containing proteins.</text>
</comment>
<comment type="PTM">
    <text evidence="3">Ubiquitinated in the presence of STUB1-UBE2D1 complex (in vitro).</text>
</comment>
<comment type="PTM">
    <text evidence="3">ISGylated.</text>
</comment>
<comment type="PTM">
    <text evidence="3">S-nitrosylated; negatively regulates the ATPase activity.</text>
</comment>
<comment type="PTM">
    <text evidence="3">Phosphorylation at Tyr-303 by SRC is induced by lipopolysaccharide. Phosphorylation at Ser-226 and Ser-257 inhibits AHR interaction.</text>
</comment>
<comment type="PTM">
    <text evidence="3">Methylated by SMYD2; facilitates dimerization and chaperone complex formation; promotes cancer cell proliferation.</text>
</comment>
<comment type="PTM">
    <text evidence="3">Cleaved following oxidative stress resulting in HSP90AB1 protein radicals formation; disrupts the chaperoning function and the degradation of its client proteins.</text>
</comment>
<comment type="similarity">
    <text evidence="9">Belongs to the heat shock protein 90 family.</text>
</comment>
<organism>
    <name type="scientific">Oryctolagus cuniculus</name>
    <name type="common">Rabbit</name>
    <dbReference type="NCBI Taxonomy" id="9986"/>
    <lineage>
        <taxon>Eukaryota</taxon>
        <taxon>Metazoa</taxon>
        <taxon>Chordata</taxon>
        <taxon>Craniata</taxon>
        <taxon>Vertebrata</taxon>
        <taxon>Euteleostomi</taxon>
        <taxon>Mammalia</taxon>
        <taxon>Eutheria</taxon>
        <taxon>Euarchontoglires</taxon>
        <taxon>Glires</taxon>
        <taxon>Lagomorpha</taxon>
        <taxon>Leporidae</taxon>
        <taxon>Oryctolagus</taxon>
    </lineage>
</organism>
<dbReference type="EMBL" id="AAGW02018042">
    <property type="status" value="NOT_ANNOTATED_CDS"/>
    <property type="molecule type" value="Genomic_DNA"/>
</dbReference>
<dbReference type="PIR" id="B34461">
    <property type="entry name" value="B34461"/>
</dbReference>
<dbReference type="RefSeq" id="XP_002714493.1">
    <property type="nucleotide sequence ID" value="XM_002714447.4"/>
</dbReference>
<dbReference type="RefSeq" id="XP_069930147.1">
    <property type="nucleotide sequence ID" value="XM_070074046.1"/>
</dbReference>
<dbReference type="SMR" id="P30947"/>
<dbReference type="FunCoup" id="P30947">
    <property type="interactions" value="1555"/>
</dbReference>
<dbReference type="STRING" id="9986.ENSOCUP00000012976"/>
<dbReference type="ChEMBL" id="CHEMBL3317338"/>
<dbReference type="GlyCosmos" id="P30947">
    <property type="glycosylation" value="2 sites, No reported glycans"/>
</dbReference>
<dbReference type="PaxDb" id="9986-ENSOCUP00000012976"/>
<dbReference type="ABCD" id="P30947">
    <property type="antibodies" value="1 sequenced antibody"/>
</dbReference>
<dbReference type="Ensembl" id="ENSOCUT00000015097.4">
    <property type="protein sequence ID" value="ENSOCUP00000012976.4"/>
    <property type="gene ID" value="ENSOCUG00000012842.4"/>
</dbReference>
<dbReference type="GeneID" id="100358690"/>
<dbReference type="KEGG" id="ocu:100358690"/>
<dbReference type="CTD" id="3326"/>
<dbReference type="eggNOG" id="KOG0019">
    <property type="taxonomic scope" value="Eukaryota"/>
</dbReference>
<dbReference type="GeneTree" id="ENSGT01020000230401"/>
<dbReference type="InParanoid" id="P30947"/>
<dbReference type="OrthoDB" id="5426351at2759"/>
<dbReference type="TreeFam" id="TF300686"/>
<dbReference type="Proteomes" id="UP000001811">
    <property type="component" value="Chromosome 12"/>
</dbReference>
<dbReference type="Bgee" id="ENSOCUG00000012842">
    <property type="expression patterns" value="Expressed in frontal cortex and 15 other cell types or tissues"/>
</dbReference>
<dbReference type="GO" id="GO:0034751">
    <property type="term" value="C:aryl hydrocarbon receptor complex"/>
    <property type="evidence" value="ECO:0000250"/>
    <property type="project" value="UniProtKB"/>
</dbReference>
<dbReference type="GO" id="GO:0005737">
    <property type="term" value="C:cytoplasm"/>
    <property type="evidence" value="ECO:0000250"/>
    <property type="project" value="UniProtKB"/>
</dbReference>
<dbReference type="GO" id="GO:0120293">
    <property type="term" value="C:dynein axonemal particle"/>
    <property type="evidence" value="ECO:0000250"/>
    <property type="project" value="UniProtKB"/>
</dbReference>
<dbReference type="GO" id="GO:0005576">
    <property type="term" value="C:extracellular region"/>
    <property type="evidence" value="ECO:0000250"/>
    <property type="project" value="UniProtKB"/>
</dbReference>
<dbReference type="GO" id="GO:0042470">
    <property type="term" value="C:melanosome"/>
    <property type="evidence" value="ECO:0007669"/>
    <property type="project" value="UniProtKB-SubCell"/>
</dbReference>
<dbReference type="GO" id="GO:0005634">
    <property type="term" value="C:nucleus"/>
    <property type="evidence" value="ECO:0000250"/>
    <property type="project" value="UniProtKB"/>
</dbReference>
<dbReference type="GO" id="GO:0005886">
    <property type="term" value="C:plasma membrane"/>
    <property type="evidence" value="ECO:0007669"/>
    <property type="project" value="UniProtKB-SubCell"/>
</dbReference>
<dbReference type="GO" id="GO:0005524">
    <property type="term" value="F:ATP binding"/>
    <property type="evidence" value="ECO:0007669"/>
    <property type="project" value="UniProtKB-KW"/>
</dbReference>
<dbReference type="GO" id="GO:0016887">
    <property type="term" value="F:ATP hydrolysis activity"/>
    <property type="evidence" value="ECO:0007669"/>
    <property type="project" value="InterPro"/>
</dbReference>
<dbReference type="GO" id="GO:0140662">
    <property type="term" value="F:ATP-dependent protein folding chaperone"/>
    <property type="evidence" value="ECO:0007669"/>
    <property type="project" value="InterPro"/>
</dbReference>
<dbReference type="GO" id="GO:0046983">
    <property type="term" value="F:protein dimerization activity"/>
    <property type="evidence" value="ECO:0000250"/>
    <property type="project" value="UniProtKB"/>
</dbReference>
<dbReference type="GO" id="GO:0141069">
    <property type="term" value="F:receptor ligand inhibitor activity"/>
    <property type="evidence" value="ECO:0000250"/>
    <property type="project" value="UniProtKB"/>
</dbReference>
<dbReference type="GO" id="GO:0051082">
    <property type="term" value="F:unfolded protein binding"/>
    <property type="evidence" value="ECO:0007669"/>
    <property type="project" value="InterPro"/>
</dbReference>
<dbReference type="GO" id="GO:0032435">
    <property type="term" value="P:negative regulation of proteasomal ubiquitin-dependent protein catabolic process"/>
    <property type="evidence" value="ECO:0000250"/>
    <property type="project" value="UniProtKB"/>
</dbReference>
<dbReference type="GO" id="GO:0030511">
    <property type="term" value="P:positive regulation of transforming growth factor beta receptor signaling pathway"/>
    <property type="evidence" value="ECO:0000250"/>
    <property type="project" value="UniProtKB"/>
</dbReference>
<dbReference type="GO" id="GO:0051726">
    <property type="term" value="P:regulation of cell cycle"/>
    <property type="evidence" value="ECO:0000250"/>
    <property type="project" value="UniProtKB"/>
</dbReference>
<dbReference type="CDD" id="cd16927">
    <property type="entry name" value="HATPase_Hsp90-like"/>
    <property type="match status" value="1"/>
</dbReference>
<dbReference type="FunFam" id="1.20.120.790:FF:000001">
    <property type="entry name" value="Heat shock protein 90 alpha"/>
    <property type="match status" value="1"/>
</dbReference>
<dbReference type="FunFam" id="3.30.230.80:FF:000001">
    <property type="entry name" value="Heat shock protein 90 alpha"/>
    <property type="match status" value="1"/>
</dbReference>
<dbReference type="FunFam" id="3.40.50.11260:FF:000001">
    <property type="entry name" value="Heat shock protein 90 alpha"/>
    <property type="match status" value="1"/>
</dbReference>
<dbReference type="FunFam" id="3.30.565.10:FF:000204">
    <property type="entry name" value="Heat shock protein HSP 90-beta"/>
    <property type="match status" value="1"/>
</dbReference>
<dbReference type="Gene3D" id="3.30.230.80">
    <property type="match status" value="1"/>
</dbReference>
<dbReference type="Gene3D" id="3.40.50.11260">
    <property type="match status" value="1"/>
</dbReference>
<dbReference type="Gene3D" id="1.20.120.790">
    <property type="entry name" value="Heat shock protein 90, C-terminal domain"/>
    <property type="match status" value="1"/>
</dbReference>
<dbReference type="Gene3D" id="3.30.565.10">
    <property type="entry name" value="Histidine kinase-like ATPase, C-terminal domain"/>
    <property type="match status" value="1"/>
</dbReference>
<dbReference type="HAMAP" id="MF_00505">
    <property type="entry name" value="HSP90"/>
    <property type="match status" value="1"/>
</dbReference>
<dbReference type="InterPro" id="IPR036890">
    <property type="entry name" value="HATPase_C_sf"/>
</dbReference>
<dbReference type="InterPro" id="IPR019805">
    <property type="entry name" value="Heat_shock_protein_90_CS"/>
</dbReference>
<dbReference type="InterPro" id="IPR037196">
    <property type="entry name" value="HSP90_C"/>
</dbReference>
<dbReference type="InterPro" id="IPR001404">
    <property type="entry name" value="Hsp90_fam"/>
</dbReference>
<dbReference type="InterPro" id="IPR020575">
    <property type="entry name" value="Hsp90_N"/>
</dbReference>
<dbReference type="InterPro" id="IPR020568">
    <property type="entry name" value="Ribosomal_Su5_D2-typ_SF"/>
</dbReference>
<dbReference type="NCBIfam" id="NF003555">
    <property type="entry name" value="PRK05218.1"/>
    <property type="match status" value="1"/>
</dbReference>
<dbReference type="PANTHER" id="PTHR11528">
    <property type="entry name" value="HEAT SHOCK PROTEIN 90 FAMILY MEMBER"/>
    <property type="match status" value="1"/>
</dbReference>
<dbReference type="Pfam" id="PF13589">
    <property type="entry name" value="HATPase_c_3"/>
    <property type="match status" value="1"/>
</dbReference>
<dbReference type="Pfam" id="PF00183">
    <property type="entry name" value="HSP90"/>
    <property type="match status" value="1"/>
</dbReference>
<dbReference type="PIRSF" id="PIRSF002583">
    <property type="entry name" value="Hsp90"/>
    <property type="match status" value="1"/>
</dbReference>
<dbReference type="PRINTS" id="PR00775">
    <property type="entry name" value="HEATSHOCK90"/>
</dbReference>
<dbReference type="SMART" id="SM00387">
    <property type="entry name" value="HATPase_c"/>
    <property type="match status" value="1"/>
</dbReference>
<dbReference type="SUPFAM" id="SSF55874">
    <property type="entry name" value="ATPase domain of HSP90 chaperone/DNA topoisomerase II/histidine kinase"/>
    <property type="match status" value="1"/>
</dbReference>
<dbReference type="SUPFAM" id="SSF110942">
    <property type="entry name" value="HSP90 C-terminal domain"/>
    <property type="match status" value="1"/>
</dbReference>
<dbReference type="SUPFAM" id="SSF54211">
    <property type="entry name" value="Ribosomal protein S5 domain 2-like"/>
    <property type="match status" value="1"/>
</dbReference>
<dbReference type="PROSITE" id="PS00298">
    <property type="entry name" value="HSP90"/>
    <property type="match status" value="1"/>
</dbReference>
<proteinExistence type="evidence at protein level"/>
<reference key="1">
    <citation type="journal article" date="2011" name="Nature">
        <title>A high-resolution map of human evolutionary constraint using 29 mammals.</title>
        <authorList>
            <person name="Lindblad-Toh K."/>
            <person name="Garber M."/>
            <person name="Zuk O."/>
            <person name="Lin M.F."/>
            <person name="Parker B.J."/>
            <person name="Washietl S."/>
            <person name="Kheradpour P."/>
            <person name="Ernst J."/>
            <person name="Jordan G."/>
            <person name="Mauceli E."/>
            <person name="Ward L.D."/>
            <person name="Lowe C.B."/>
            <person name="Holloway A.K."/>
            <person name="Clamp M."/>
            <person name="Gnerre S."/>
            <person name="Alfoldi J."/>
            <person name="Beal K."/>
            <person name="Chang J."/>
            <person name="Clawson H."/>
            <person name="Cuff J."/>
            <person name="Di Palma F."/>
            <person name="Fitzgerald S."/>
            <person name="Flicek P."/>
            <person name="Guttman M."/>
            <person name="Hubisz M.J."/>
            <person name="Jaffe D.B."/>
            <person name="Jungreis I."/>
            <person name="Kent W.J."/>
            <person name="Kostka D."/>
            <person name="Lara M."/>
            <person name="Martins A.L."/>
            <person name="Massingham T."/>
            <person name="Moltke I."/>
            <person name="Raney B.J."/>
            <person name="Rasmussen M.D."/>
            <person name="Robinson J."/>
            <person name="Stark A."/>
            <person name="Vilella A.J."/>
            <person name="Wen J."/>
            <person name="Xie X."/>
            <person name="Zody M.C."/>
            <person name="Baldwin J."/>
            <person name="Bloom T."/>
            <person name="Chin C.W."/>
            <person name="Heiman D."/>
            <person name="Nicol R."/>
            <person name="Nusbaum C."/>
            <person name="Young S."/>
            <person name="Wilkinson J."/>
            <person name="Worley K.C."/>
            <person name="Kovar C.L."/>
            <person name="Muzny D.M."/>
            <person name="Gibbs R.A."/>
            <person name="Cree A."/>
            <person name="Dihn H.H."/>
            <person name="Fowler G."/>
            <person name="Jhangiani S."/>
            <person name="Joshi V."/>
            <person name="Lee S."/>
            <person name="Lewis L.R."/>
            <person name="Nazareth L.V."/>
            <person name="Okwuonu G."/>
            <person name="Santibanez J."/>
            <person name="Warren W.C."/>
            <person name="Mardis E.R."/>
            <person name="Weinstock G.M."/>
            <person name="Wilson R.K."/>
            <person name="Delehaunty K."/>
            <person name="Dooling D."/>
            <person name="Fronik C."/>
            <person name="Fulton L."/>
            <person name="Fulton B."/>
            <person name="Graves T."/>
            <person name="Minx P."/>
            <person name="Sodergren E."/>
            <person name="Birney E."/>
            <person name="Margulies E.H."/>
            <person name="Herrero J."/>
            <person name="Green E.D."/>
            <person name="Haussler D."/>
            <person name="Siepel A."/>
            <person name="Goldman N."/>
            <person name="Pollard K.S."/>
            <person name="Pedersen J.S."/>
            <person name="Lander E.S."/>
            <person name="Kellis M."/>
        </authorList>
    </citation>
    <scope>NUCLEOTIDE SEQUENCE [LARGE SCALE GENOMIC DNA]</scope>
    <source>
        <strain>Thorbecke</strain>
    </source>
</reference>
<reference key="2">
    <citation type="journal article" date="1989" name="J. Biol. Chem.">
        <title>The human double-stranded DNA-activated protein kinase phosphorylates the 90-kDa heat-shock protein, hsp90 alpha at two NH2-terminal threonine residues.</title>
        <authorList>
            <person name="Lees-Miller S.P."/>
            <person name="Anderson C.W."/>
        </authorList>
    </citation>
    <scope>PROTEIN SEQUENCE OF 2-25</scope>
</reference>